<dbReference type="EMBL" id="AJ294725">
    <property type="protein sequence ID" value="CAC24582.1"/>
    <property type="molecule type" value="Genomic_DNA"/>
</dbReference>
<dbReference type="PIR" id="S38597">
    <property type="entry name" value="S38597"/>
</dbReference>
<dbReference type="RefSeq" id="NP_074971.1">
    <property type="nucleotide sequence ID" value="NC_002652.1"/>
</dbReference>
<dbReference type="GeneID" id="1457306"/>
<dbReference type="GO" id="GO:0009536">
    <property type="term" value="C:plastid"/>
    <property type="evidence" value="ECO:0007669"/>
    <property type="project" value="UniProtKB-SubCell"/>
</dbReference>
<dbReference type="InterPro" id="IPR006851">
    <property type="entry name" value="DUF613"/>
</dbReference>
<dbReference type="Pfam" id="PF04764">
    <property type="entry name" value="DUF613"/>
    <property type="match status" value="1"/>
</dbReference>
<sequence length="162" mass="20037">MVFICLYFEVHGIYNKNEKLFDRIYCNSNGHILEVCRKLKTQDFWFSEFGDKPYYFFSNKVSTYCKIGGNDIGEFEYYLLDIFLYGPLKFKVNDIYDFNMIGALERRQRYSEMIEREKKNKNKFKIVFYFFQKKYKLLLENRFLVKERLTTKNNLIVYIWYW</sequence>
<organism>
    <name type="scientific">Euglena longa</name>
    <name type="common">Euglenophycean alga</name>
    <name type="synonym">Astasia longa</name>
    <dbReference type="NCBI Taxonomy" id="3037"/>
    <lineage>
        <taxon>Eukaryota</taxon>
        <taxon>Discoba</taxon>
        <taxon>Euglenozoa</taxon>
        <taxon>Euglenida</taxon>
        <taxon>Spirocuta</taxon>
        <taxon>Euglenophyceae</taxon>
        <taxon>Euglenales</taxon>
        <taxon>Euglenaceae</taxon>
        <taxon>Euglena</taxon>
    </lineage>
</organism>
<evidence type="ECO:0000305" key="1"/>
<protein>
    <recommendedName>
        <fullName>Uncharacterized protein in rps2-rps9 intergenic region</fullName>
    </recommendedName>
    <alternativeName>
        <fullName>ORF162</fullName>
    </alternativeName>
</protein>
<geneLocation type="non-photosynthetic plastid"/>
<name>YCY1_EUGLO</name>
<accession>P34775</accession>
<feature type="chain" id="PRO_0000217417" description="Uncharacterized protein in rps2-rps9 intergenic region">
    <location>
        <begin position="1"/>
        <end position="162"/>
    </location>
</feature>
<proteinExistence type="inferred from homology"/>
<keyword id="KW-0934">Plastid</keyword>
<reference key="1">
    <citation type="journal article" date="1994" name="Curr. Genet.">
        <title>Genes for components of the chloroplast translational apparatus are conserved in the reduced 73-kb plastid DNA of the nonphotosynthetic euglenoid flagellate Astasia longa.</title>
        <authorList>
            <person name="Gockel G."/>
            <person name="Hachtel W."/>
            <person name="Baier S."/>
            <person name="Fliss C."/>
            <person name="Henke M."/>
        </authorList>
    </citation>
    <scope>NUCLEOTIDE SEQUENCE [GENOMIC DNA]</scope>
    <source>
        <strain>CCAP 1204-17a</strain>
    </source>
</reference>
<reference key="2">
    <citation type="journal article" date="2000" name="Protist">
        <title>Complete gene map of the plastid genome of the nonphotosynthetic euglenoid flagellate Astasia longa.</title>
        <authorList>
            <person name="Gockel G."/>
            <person name="Hachtel W."/>
        </authorList>
    </citation>
    <scope>NUCLEOTIDE SEQUENCE [LARGE SCALE GENOMIC DNA]</scope>
    <source>
        <strain>CCAP 1204-17a</strain>
    </source>
</reference>
<comment type="subcellular location">
    <subcellularLocation>
        <location>Plastid</location>
    </subcellularLocation>
</comment>
<comment type="similarity">
    <text evidence="1">Belongs to the A.longa ORF167/ORF288 family.</text>
</comment>